<feature type="chain" id="PRO_0000288248" description="tRNA (guanine-N(7)-)-methyltransferase">
    <location>
        <begin position="1"/>
        <end position="274"/>
    </location>
</feature>
<feature type="region of interest" description="Disordered" evidence="3">
    <location>
        <begin position="16"/>
        <end position="40"/>
    </location>
</feature>
<feature type="active site" evidence="1">
    <location>
        <position position="181"/>
    </location>
</feature>
<feature type="binding site" evidence="2">
    <location>
        <position position="106"/>
    </location>
    <ligand>
        <name>S-adenosyl-L-methionine</name>
        <dbReference type="ChEBI" id="CHEBI:59789"/>
    </ligand>
</feature>
<feature type="binding site" evidence="2">
    <location>
        <position position="131"/>
    </location>
    <ligand>
        <name>S-adenosyl-L-methionine</name>
        <dbReference type="ChEBI" id="CHEBI:59789"/>
    </ligand>
</feature>
<feature type="binding site" evidence="2">
    <location>
        <position position="158"/>
    </location>
    <ligand>
        <name>S-adenosyl-L-methionine</name>
        <dbReference type="ChEBI" id="CHEBI:59789"/>
    </ligand>
</feature>
<feature type="binding site" evidence="2">
    <location>
        <position position="181"/>
    </location>
    <ligand>
        <name>S-adenosyl-L-methionine</name>
        <dbReference type="ChEBI" id="CHEBI:59789"/>
    </ligand>
</feature>
<feature type="binding site" evidence="2">
    <location>
        <position position="185"/>
    </location>
    <ligand>
        <name>substrate</name>
    </ligand>
</feature>
<feature type="binding site" evidence="2">
    <location>
        <position position="217"/>
    </location>
    <ligand>
        <name>substrate</name>
    </ligand>
</feature>
<feature type="binding site" evidence="2">
    <location>
        <begin position="252"/>
        <end position="255"/>
    </location>
    <ligand>
        <name>substrate</name>
    </ligand>
</feature>
<gene>
    <name evidence="2" type="primary">trmB</name>
    <name type="ordered locus">Veis_1672</name>
</gene>
<dbReference type="EC" id="2.1.1.33" evidence="2"/>
<dbReference type="EMBL" id="CP000542">
    <property type="protein sequence ID" value="ABM57427.1"/>
    <property type="molecule type" value="Genomic_DNA"/>
</dbReference>
<dbReference type="RefSeq" id="WP_011809434.1">
    <property type="nucleotide sequence ID" value="NC_008786.1"/>
</dbReference>
<dbReference type="SMR" id="A1WIH0"/>
<dbReference type="STRING" id="391735.Veis_1672"/>
<dbReference type="GeneID" id="76460282"/>
<dbReference type="KEGG" id="vei:Veis_1672"/>
<dbReference type="eggNOG" id="COG0220">
    <property type="taxonomic scope" value="Bacteria"/>
</dbReference>
<dbReference type="HOGENOM" id="CLU_050910_0_1_4"/>
<dbReference type="OrthoDB" id="9802090at2"/>
<dbReference type="UniPathway" id="UPA00989"/>
<dbReference type="Proteomes" id="UP000000374">
    <property type="component" value="Chromosome"/>
</dbReference>
<dbReference type="GO" id="GO:0043527">
    <property type="term" value="C:tRNA methyltransferase complex"/>
    <property type="evidence" value="ECO:0007669"/>
    <property type="project" value="TreeGrafter"/>
</dbReference>
<dbReference type="GO" id="GO:0008176">
    <property type="term" value="F:tRNA (guanine(46)-N7)-methyltransferase activity"/>
    <property type="evidence" value="ECO:0007669"/>
    <property type="project" value="UniProtKB-UniRule"/>
</dbReference>
<dbReference type="Gene3D" id="3.40.50.150">
    <property type="entry name" value="Vaccinia Virus protein VP39"/>
    <property type="match status" value="1"/>
</dbReference>
<dbReference type="HAMAP" id="MF_01057">
    <property type="entry name" value="tRNA_methyltr_TrmB"/>
    <property type="match status" value="1"/>
</dbReference>
<dbReference type="InterPro" id="IPR029063">
    <property type="entry name" value="SAM-dependent_MTases_sf"/>
</dbReference>
<dbReference type="InterPro" id="IPR003358">
    <property type="entry name" value="tRNA_(Gua-N-7)_MeTrfase_Trmb"/>
</dbReference>
<dbReference type="InterPro" id="IPR055361">
    <property type="entry name" value="tRNA_methyltr_TrmB_bact"/>
</dbReference>
<dbReference type="NCBIfam" id="TIGR00091">
    <property type="entry name" value="tRNA (guanosine(46)-N7)-methyltransferase TrmB"/>
    <property type="match status" value="1"/>
</dbReference>
<dbReference type="PANTHER" id="PTHR23417">
    <property type="entry name" value="3-DEOXY-D-MANNO-OCTULOSONIC-ACID TRANSFERASE/TRNA GUANINE-N 7 - -METHYLTRANSFERASE"/>
    <property type="match status" value="1"/>
</dbReference>
<dbReference type="PANTHER" id="PTHR23417:SF14">
    <property type="entry name" value="PENTACOTRIPEPTIDE-REPEAT REGION OF PRORP DOMAIN-CONTAINING PROTEIN"/>
    <property type="match status" value="1"/>
</dbReference>
<dbReference type="Pfam" id="PF02390">
    <property type="entry name" value="Methyltransf_4"/>
    <property type="match status" value="1"/>
</dbReference>
<dbReference type="SUPFAM" id="SSF53335">
    <property type="entry name" value="S-adenosyl-L-methionine-dependent methyltransferases"/>
    <property type="match status" value="1"/>
</dbReference>
<dbReference type="PROSITE" id="PS51625">
    <property type="entry name" value="SAM_MT_TRMB"/>
    <property type="match status" value="1"/>
</dbReference>
<protein>
    <recommendedName>
        <fullName evidence="2">tRNA (guanine-N(7)-)-methyltransferase</fullName>
        <ecNumber evidence="2">2.1.1.33</ecNumber>
    </recommendedName>
    <alternativeName>
        <fullName evidence="2">tRNA (guanine(46)-N(7))-methyltransferase</fullName>
    </alternativeName>
    <alternativeName>
        <fullName evidence="2">tRNA(m7G46)-methyltransferase</fullName>
    </alternativeName>
</protein>
<comment type="function">
    <text evidence="2">Catalyzes the formation of N(7)-methylguanine at position 46 (m7G46) in tRNA.</text>
</comment>
<comment type="catalytic activity">
    <reaction evidence="2">
        <text>guanosine(46) in tRNA + S-adenosyl-L-methionine = N(7)-methylguanosine(46) in tRNA + S-adenosyl-L-homocysteine</text>
        <dbReference type="Rhea" id="RHEA:42708"/>
        <dbReference type="Rhea" id="RHEA-COMP:10188"/>
        <dbReference type="Rhea" id="RHEA-COMP:10189"/>
        <dbReference type="ChEBI" id="CHEBI:57856"/>
        <dbReference type="ChEBI" id="CHEBI:59789"/>
        <dbReference type="ChEBI" id="CHEBI:74269"/>
        <dbReference type="ChEBI" id="CHEBI:74480"/>
        <dbReference type="EC" id="2.1.1.33"/>
    </reaction>
</comment>
<comment type="pathway">
    <text evidence="2">tRNA modification; N(7)-methylguanine-tRNA biosynthesis.</text>
</comment>
<comment type="similarity">
    <text evidence="2">Belongs to the class I-like SAM-binding methyltransferase superfamily. TrmB family.</text>
</comment>
<name>TRMB_VEREI</name>
<reference key="1">
    <citation type="submission" date="2006-12" db="EMBL/GenBank/DDBJ databases">
        <title>Complete sequence of chromosome 1 of Verminephrobacter eiseniae EF01-2.</title>
        <authorList>
            <person name="Copeland A."/>
            <person name="Lucas S."/>
            <person name="Lapidus A."/>
            <person name="Barry K."/>
            <person name="Detter J.C."/>
            <person name="Glavina del Rio T."/>
            <person name="Dalin E."/>
            <person name="Tice H."/>
            <person name="Pitluck S."/>
            <person name="Chertkov O."/>
            <person name="Brettin T."/>
            <person name="Bruce D."/>
            <person name="Han C."/>
            <person name="Tapia R."/>
            <person name="Gilna P."/>
            <person name="Schmutz J."/>
            <person name="Larimer F."/>
            <person name="Land M."/>
            <person name="Hauser L."/>
            <person name="Kyrpides N."/>
            <person name="Kim E."/>
            <person name="Stahl D."/>
            <person name="Richardson P."/>
        </authorList>
    </citation>
    <scope>NUCLEOTIDE SEQUENCE [LARGE SCALE GENOMIC DNA]</scope>
    <source>
        <strain>EF01-2</strain>
    </source>
</reference>
<evidence type="ECO:0000250" key="1"/>
<evidence type="ECO:0000255" key="2">
    <source>
        <dbReference type="HAMAP-Rule" id="MF_01057"/>
    </source>
</evidence>
<evidence type="ECO:0000256" key="3">
    <source>
        <dbReference type="SAM" id="MobiDB-lite"/>
    </source>
</evidence>
<keyword id="KW-0489">Methyltransferase</keyword>
<keyword id="KW-1185">Reference proteome</keyword>
<keyword id="KW-0949">S-adenosyl-L-methionine</keyword>
<keyword id="KW-0808">Transferase</keyword>
<keyword id="KW-0819">tRNA processing</keyword>
<accession>A1WIH0</accession>
<sequence length="274" mass="29763">MAPKLQWPIVTELTTASASRGAATGSRGVAPAVPRGGAPADVAHPQTIKSFVRRAGRTTAAQARAFEDLGPRFVVPYAPIAPIAPIAPAAPAAGAWFGRDAPLVLEIGFGMGEATAHIARVRPQDDFLCCEVHRPGVGALLKRIAEHGLTNIRILEHDAVEVIDHMLPESCLAGVHIFFPDPWHKSRHHKRRLIQPPLVARLAARLQAGGYLHCATDWQPYAEQMLQVLGAEPLLRNTAPGFAPKPGYRPLTKFENRGLRLGHGVRDLVFERRH</sequence>
<proteinExistence type="inferred from homology"/>
<organism>
    <name type="scientific">Verminephrobacter eiseniae (strain EF01-2)</name>
    <dbReference type="NCBI Taxonomy" id="391735"/>
    <lineage>
        <taxon>Bacteria</taxon>
        <taxon>Pseudomonadati</taxon>
        <taxon>Pseudomonadota</taxon>
        <taxon>Betaproteobacteria</taxon>
        <taxon>Burkholderiales</taxon>
        <taxon>Comamonadaceae</taxon>
        <taxon>Verminephrobacter</taxon>
    </lineage>
</organism>